<reference key="1">
    <citation type="journal article" date="2002" name="Science">
        <title>Biosynthesis of the enediyne antitumor antibiotic C-1027.</title>
        <authorList>
            <person name="Liu W."/>
            <person name="Christenson S.D."/>
            <person name="Standage S."/>
            <person name="Shen B."/>
        </authorList>
    </citation>
    <scope>NUCLEOTIDE SEQUENCE [GENOMIC DNA]</scope>
    <scope>FUNCTION IN THE BIOSYNTHESIS OF ENEDIYNE ANTITUMOR ANTIBIOTIC</scope>
    <source>
        <strain>C-1027</strain>
    </source>
</reference>
<reference key="2">
    <citation type="journal article" date="2007" name="Biochemistry">
        <title>The structure of L-tyrosine 2,3-aminomutase from the C-1027 enediyne antitumor antibiotic biosynthetic pathway.</title>
        <authorList>
            <person name="Christianson C.V."/>
            <person name="Montavon T.J."/>
            <person name="Van Lanen S.G."/>
            <person name="Shen B."/>
            <person name="Bruner S.D."/>
        </authorList>
    </citation>
    <scope>X-RAY CRYSTALLOGRAPHY (2.50 ANGSTROMS)</scope>
    <scope>FUNCTION</scope>
    <scope>DEHYDRATION AT SER-153</scope>
    <scope>CYCLIZATION AT ALA-152 AND GLY-154</scope>
    <scope>SUBUNIT</scope>
</reference>
<reference key="3">
    <citation type="journal article" date="2008" name="Bioorg. Med. Chem. Lett.">
        <title>Design and characterization of mechanism-based inhibitors for the tyrosine aminomutase SgTAM.</title>
        <authorList>
            <person name="Montavon T.J."/>
            <person name="Christianson C.V."/>
            <person name="Festin G.M."/>
            <person name="Shen B."/>
            <person name="Bruner S.D."/>
        </authorList>
    </citation>
    <scope>X-RAY CRYSTALLOGRAPHY (2.00 ANGSTROMS) OF 12-539</scope>
    <scope>ACTIVE SITE</scope>
    <scope>SUBUNIT</scope>
</reference>
<reference key="4">
    <citation type="journal article" date="2010" name="Biopolymers">
        <title>Probing the active site of MIO-dependent aminomutases, key catalysts in the biosynthesis of beta-amino acids incorporated in secondary metabolites.</title>
        <authorList>
            <person name="Cooke H.A."/>
            <person name="Bruner S.D."/>
        </authorList>
    </citation>
    <scope>X-RAY CRYSTALLOGRAPHY (2.20 ANGSTROMS) OF MUTANT PHE-63 IN COMPLEX WITH SUBSTRATE</scope>
    <scope>FUNCTION</scope>
    <scope>CATALYTIC ACTIVITY</scope>
    <scope>PTM</scope>
    <scope>MUTAGENESIS OF TYR-63; GLU-71; HIS-93; TYR-303 AND TYR-415</scope>
    <scope>SUBSTRATE SPECIFICITY</scope>
    <scope>SUBUNIT</scope>
</reference>
<sequence>MALTQVETEIVPVSVDGETLTVEAVRRVAEERATVDVPAESIAKAQKSREIFEGIAEQNIPIYGVTTGYGEMIYMQVDKSKEVELQTNLVRSHSAGVGPLFAEDEARAIVAARLNTLAKGHSAVRPIILERLAQYLNEGITPAIPEIGSLGASGDLAPLSHVASTLIGEGYVLRDGRPVETAQVLAERGIEPLELRFKEGLALINGTSGMTGLGSLVVGRALEQAQQAEIVTALLIEAVRGSTSPFLAEGHDIARPHEGQIDTAANMRALMRGSGLTVEHADLRRELQKDKEAGKDVQRSEIYLQKAYSLRAIPQVVGAVRDTLYHARHKLRIELNSANDNPLFFEGKEIFHGANFHGQPIAFAMDFVTIALTQLGVLAERQINRVLNRHLSYGLPEFLVSGDPGLHSGFAGAQYPATALVAENRTIGPASTQSVPSNGDNQDVVSMGLISARNARRVLSNNNKILAVEYLAAAQAVDISGRFDGLSPAAKATYEAVRRLVPTLGVDRYMADDIELVADALSRGEFLRAIARETDIQLR</sequence>
<comment type="function">
    <text evidence="1 2 4">Involved in the biosynthesis of the enediyne antitumor antibiotic C-1027. Catalyzes the MIO-dependent deamination of L-tyrosine generating the corresponding alpha,beta-unsaturated acid, (S)-beta-tyrosine.</text>
</comment>
<comment type="catalytic activity">
    <reaction evidence="4">
        <text>L-tyrosine = 3-amino-3-(4-hydroxyphenyl)propanoate</text>
        <dbReference type="Rhea" id="RHEA:15781"/>
        <dbReference type="ChEBI" id="CHEBI:57956"/>
        <dbReference type="ChEBI" id="CHEBI:58315"/>
        <dbReference type="EC" id="5.4.3.6"/>
    </reaction>
</comment>
<comment type="catalytic activity">
    <reaction evidence="4">
        <text>L-tyrosine = (E)-4-coumarate + NH4(+)</text>
        <dbReference type="Rhea" id="RHEA:24906"/>
        <dbReference type="ChEBI" id="CHEBI:12876"/>
        <dbReference type="ChEBI" id="CHEBI:28938"/>
        <dbReference type="ChEBI" id="CHEBI:58315"/>
        <dbReference type="EC" id="4.3.1.23"/>
    </reaction>
</comment>
<comment type="subunit">
    <text evidence="2 3 4">Homotetramer; dimer of dimers.</text>
</comment>
<comment type="PTM">
    <text evidence="2 5">Contains an active site 4-methylidene-imidazol-5-one (MIO), which is formed autocatalytically by cyclization and dehydration of residues Ala-Ser-Gly.</text>
</comment>
<comment type="similarity">
    <text evidence="5">Belongs to the TAL/TAM family.</text>
</comment>
<proteinExistence type="evidence at protein level"/>
<organism>
    <name type="scientific">Streptomyces globisporus</name>
    <dbReference type="NCBI Taxonomy" id="1908"/>
    <lineage>
        <taxon>Bacteria</taxon>
        <taxon>Bacillati</taxon>
        <taxon>Actinomycetota</taxon>
        <taxon>Actinomycetes</taxon>
        <taxon>Kitasatosporales</taxon>
        <taxon>Streptomycetaceae</taxon>
        <taxon>Streptomyces</taxon>
    </lineage>
</organism>
<feature type="chain" id="PRO_0000424197" description="MIO-dependent tyrosine 2,3-aminomutase">
    <location>
        <begin position="1"/>
        <end position="539"/>
    </location>
</feature>
<feature type="active site" description="Proton donor/acceptor" evidence="3">
    <location>
        <position position="63"/>
    </location>
</feature>
<feature type="binding site" evidence="4">
    <location>
        <position position="93"/>
    </location>
    <ligand>
        <name>substrate</name>
    </ligand>
</feature>
<feature type="binding site" evidence="4">
    <location>
        <position position="205"/>
    </location>
    <ligand>
        <name>substrate</name>
    </ligand>
</feature>
<feature type="binding site" evidence="4">
    <location>
        <position position="311"/>
    </location>
    <ligand>
        <name>substrate</name>
    </ligand>
</feature>
<feature type="modified residue" description="2,3-didehydroalanine (Ser)" evidence="2">
    <location>
        <position position="153"/>
    </location>
</feature>
<feature type="cross-link" description="5-imidazolinone (Ala-Gly)" evidence="2">
    <location>
        <begin position="152"/>
        <end position="154"/>
    </location>
</feature>
<feature type="mutagenesis site" description="Complete loss of activity. It does not affect the over-all structure of the enzyme." evidence="4">
    <original>Y</original>
    <variation>F</variation>
    <location>
        <position position="63"/>
    </location>
</feature>
<feature type="mutagenesis site" description="Despite a decrease in activity, it shows lyase activity over time and still produced some amount of beta-tyrosine." evidence="4">
    <original>E</original>
    <variation>A</variation>
    <location>
        <position position="71"/>
    </location>
</feature>
<feature type="mutagenesis site" description="Complete loss of activity." evidence="4">
    <original>H</original>
    <variation>F</variation>
    <location>
        <position position="93"/>
    </location>
</feature>
<feature type="mutagenesis site" description="Despite a decrease in activity, it shows lyase activity over time and still produced some amount of beta-tyrosine." evidence="4">
    <original>Y</original>
    <variation>A</variation>
    <location>
        <position position="303"/>
    </location>
</feature>
<feature type="mutagenesis site" description="Complete loss of activity." evidence="4">
    <original>Y</original>
    <variation>V</variation>
    <location>
        <position position="415"/>
    </location>
</feature>
<feature type="strand" evidence="6">
    <location>
        <begin position="17"/>
        <end position="19"/>
    </location>
</feature>
<feature type="helix" evidence="6">
    <location>
        <begin position="22"/>
        <end position="30"/>
    </location>
</feature>
<feature type="helix" evidence="6">
    <location>
        <begin position="39"/>
        <end position="56"/>
    </location>
</feature>
<feature type="turn" evidence="6">
    <location>
        <begin position="57"/>
        <end position="59"/>
    </location>
</feature>
<feature type="turn" evidence="6">
    <location>
        <begin position="63"/>
        <end position="65"/>
    </location>
</feature>
<feature type="helix" evidence="6">
    <location>
        <begin position="70"/>
        <end position="74"/>
    </location>
</feature>
<feature type="strand" evidence="6">
    <location>
        <begin position="75"/>
        <end position="77"/>
    </location>
</feature>
<feature type="helix" evidence="6">
    <location>
        <begin position="79"/>
        <end position="81"/>
    </location>
</feature>
<feature type="helix" evidence="6">
    <location>
        <begin position="82"/>
        <end position="92"/>
    </location>
</feature>
<feature type="strand" evidence="6">
    <location>
        <begin position="97"/>
        <end position="100"/>
    </location>
</feature>
<feature type="helix" evidence="6">
    <location>
        <begin position="103"/>
        <end position="117"/>
    </location>
</feature>
<feature type="helix" evidence="6">
    <location>
        <begin position="126"/>
        <end position="137"/>
    </location>
</feature>
<feature type="strand" evidence="6">
    <location>
        <begin position="145"/>
        <end position="147"/>
    </location>
</feature>
<feature type="helix" evidence="6">
    <location>
        <begin position="156"/>
        <end position="166"/>
    </location>
</feature>
<feature type="strand" evidence="6">
    <location>
        <begin position="170"/>
        <end position="174"/>
    </location>
</feature>
<feature type="strand" evidence="6">
    <location>
        <begin position="177"/>
        <end position="180"/>
    </location>
</feature>
<feature type="helix" evidence="6">
    <location>
        <begin position="181"/>
        <end position="186"/>
    </location>
</feature>
<feature type="turn" evidence="6">
    <location>
        <begin position="187"/>
        <end position="189"/>
    </location>
</feature>
<feature type="helix" evidence="6">
    <location>
        <begin position="199"/>
        <end position="204"/>
    </location>
</feature>
<feature type="strand" evidence="6">
    <location>
        <begin position="205"/>
        <end position="207"/>
    </location>
</feature>
<feature type="helix" evidence="6">
    <location>
        <begin position="208"/>
        <end position="238"/>
    </location>
</feature>
<feature type="helix" evidence="6">
    <location>
        <begin position="244"/>
        <end position="246"/>
    </location>
</feature>
<feature type="helix" evidence="6">
    <location>
        <begin position="248"/>
        <end position="250"/>
    </location>
</feature>
<feature type="turn" evidence="6">
    <location>
        <begin position="251"/>
        <end position="254"/>
    </location>
</feature>
<feature type="helix" evidence="6">
    <location>
        <begin position="258"/>
        <end position="271"/>
    </location>
</feature>
<feature type="strand" evidence="6">
    <location>
        <begin position="275"/>
        <end position="278"/>
    </location>
</feature>
<feature type="helix" evidence="6">
    <location>
        <begin position="280"/>
        <end position="290"/>
    </location>
</feature>
<feature type="strand" evidence="6">
    <location>
        <begin position="296"/>
        <end position="298"/>
    </location>
</feature>
<feature type="helix" evidence="6">
    <location>
        <begin position="308"/>
        <end position="310"/>
    </location>
</feature>
<feature type="helix" evidence="6">
    <location>
        <begin position="313"/>
        <end position="335"/>
    </location>
</feature>
<feature type="strand" evidence="6">
    <location>
        <begin position="341"/>
        <end position="343"/>
    </location>
</feature>
<feature type="helix" evidence="6">
    <location>
        <begin position="359"/>
        <end position="387"/>
    </location>
</feature>
<feature type="turn" evidence="6">
    <location>
        <begin position="389"/>
        <end position="391"/>
    </location>
</feature>
<feature type="strand" evidence="6">
    <location>
        <begin position="392"/>
        <end position="394"/>
    </location>
</feature>
<feature type="helix" evidence="6">
    <location>
        <begin position="397"/>
        <end position="399"/>
    </location>
</feature>
<feature type="helix" evidence="6">
    <location>
        <begin position="411"/>
        <end position="424"/>
    </location>
</feature>
<feature type="turn" evidence="6">
    <location>
        <begin position="438"/>
        <end position="441"/>
    </location>
</feature>
<feature type="helix" evidence="6">
    <location>
        <begin position="448"/>
        <end position="480"/>
    </location>
</feature>
<feature type="helix" evidence="6">
    <location>
        <begin position="483"/>
        <end position="485"/>
    </location>
</feature>
<feature type="helix" evidence="6">
    <location>
        <begin position="488"/>
        <end position="500"/>
    </location>
</feature>
<feature type="helix" evidence="6">
    <location>
        <begin position="511"/>
        <end position="522"/>
    </location>
</feature>
<feature type="helix" evidence="6">
    <location>
        <begin position="525"/>
        <end position="533"/>
    </location>
</feature>
<protein>
    <recommendedName>
        <fullName>MIO-dependent tyrosine 2,3-aminomutase</fullName>
        <ecNumber>5.4.3.6</ecNumber>
    </recommendedName>
    <alternativeName>
        <fullName>Tyrosine ammonia-lyase</fullName>
        <ecNumber>4.3.1.23</ecNumber>
    </alternativeName>
</protein>
<dbReference type="EC" id="5.4.3.6"/>
<dbReference type="EC" id="4.3.1.23"/>
<dbReference type="EMBL" id="AY048670">
    <property type="protein sequence ID" value="AAL06680.1"/>
    <property type="molecule type" value="Genomic_DNA"/>
</dbReference>
<dbReference type="PDB" id="2OHY">
    <property type="method" value="X-ray"/>
    <property type="resolution" value="2.50 A"/>
    <property type="chains" value="A/B=1-539"/>
</dbReference>
<dbReference type="PDB" id="2QVE">
    <property type="method" value="X-ray"/>
    <property type="resolution" value="2.00 A"/>
    <property type="chains" value="A/B=12-539"/>
</dbReference>
<dbReference type="PDB" id="2RJR">
    <property type="method" value="X-ray"/>
    <property type="resolution" value="2.10 A"/>
    <property type="chains" value="A/B=1-539"/>
</dbReference>
<dbReference type="PDB" id="2RJS">
    <property type="method" value="X-ray"/>
    <property type="resolution" value="2.40 A"/>
    <property type="chains" value="A/B=1-539"/>
</dbReference>
<dbReference type="PDB" id="3KDY">
    <property type="method" value="X-ray"/>
    <property type="resolution" value="2.20 A"/>
    <property type="chains" value="A/B=1-539"/>
</dbReference>
<dbReference type="PDB" id="3KDZ">
    <property type="method" value="X-ray"/>
    <property type="resolution" value="2.20 A"/>
    <property type="chains" value="A/B=1-539"/>
</dbReference>
<dbReference type="PDBsum" id="2OHY"/>
<dbReference type="PDBsum" id="2QVE"/>
<dbReference type="PDBsum" id="2RJR"/>
<dbReference type="PDBsum" id="2RJS"/>
<dbReference type="PDBsum" id="3KDY"/>
<dbReference type="PDBsum" id="3KDZ"/>
<dbReference type="SMR" id="Q8GMG0"/>
<dbReference type="DrugBank" id="DB06946">
    <property type="generic name" value="(2S,3S)-3-(4-fluorophenyl)-2,3-dihydroxypropanoic acid"/>
</dbReference>
<dbReference type="SABIO-RK" id="Q8GMG0"/>
<dbReference type="EvolutionaryTrace" id="Q8GMG0"/>
<dbReference type="GO" id="GO:0050368">
    <property type="term" value="F:L-tyrosine 2,3-aminomutase activity"/>
    <property type="evidence" value="ECO:0000314"/>
    <property type="project" value="UniProtKB"/>
</dbReference>
<dbReference type="GO" id="GO:0052883">
    <property type="term" value="F:tyrosine ammonia-lyase activity"/>
    <property type="evidence" value="ECO:0000314"/>
    <property type="project" value="UniProtKB"/>
</dbReference>
<dbReference type="GO" id="GO:0017000">
    <property type="term" value="P:antibiotic biosynthetic process"/>
    <property type="evidence" value="ECO:0007669"/>
    <property type="project" value="UniProtKB-KW"/>
</dbReference>
<dbReference type="GO" id="GO:0009403">
    <property type="term" value="P:toxin biosynthetic process"/>
    <property type="evidence" value="ECO:0000314"/>
    <property type="project" value="UniProtKB"/>
</dbReference>
<dbReference type="CDD" id="cd00332">
    <property type="entry name" value="PAL-HAL"/>
    <property type="match status" value="1"/>
</dbReference>
<dbReference type="FunFam" id="1.10.275.10:FF:000005">
    <property type="entry name" value="Histidine ammonia-lyase"/>
    <property type="match status" value="1"/>
</dbReference>
<dbReference type="FunFam" id="1.20.200.10:FF:000003">
    <property type="entry name" value="Histidine ammonia-lyase"/>
    <property type="match status" value="1"/>
</dbReference>
<dbReference type="Gene3D" id="1.20.200.10">
    <property type="entry name" value="Fumarase/aspartase (Central domain)"/>
    <property type="match status" value="1"/>
</dbReference>
<dbReference type="Gene3D" id="1.10.275.10">
    <property type="entry name" value="Fumarase/aspartase (N-terminal domain)"/>
    <property type="match status" value="1"/>
</dbReference>
<dbReference type="InterPro" id="IPR001106">
    <property type="entry name" value="Aromatic_Lyase"/>
</dbReference>
<dbReference type="InterPro" id="IPR024083">
    <property type="entry name" value="Fumarase/histidase_N"/>
</dbReference>
<dbReference type="InterPro" id="IPR008948">
    <property type="entry name" value="L-Aspartase-like"/>
</dbReference>
<dbReference type="InterPro" id="IPR022313">
    <property type="entry name" value="Phe/His_NH3-lyase_AS"/>
</dbReference>
<dbReference type="InterPro" id="IPR022314">
    <property type="entry name" value="Tyr_aminomutase"/>
</dbReference>
<dbReference type="NCBIfam" id="TIGR03832">
    <property type="entry name" value="Tyr_2_3_mutase"/>
    <property type="match status" value="1"/>
</dbReference>
<dbReference type="PANTHER" id="PTHR10362">
    <property type="entry name" value="HISTIDINE AMMONIA-LYASE"/>
    <property type="match status" value="1"/>
</dbReference>
<dbReference type="Pfam" id="PF00221">
    <property type="entry name" value="Lyase_aromatic"/>
    <property type="match status" value="1"/>
</dbReference>
<dbReference type="SUPFAM" id="SSF48557">
    <property type="entry name" value="L-aspartase-like"/>
    <property type="match status" value="1"/>
</dbReference>
<dbReference type="PROSITE" id="PS00488">
    <property type="entry name" value="PAL_HISTIDASE"/>
    <property type="match status" value="1"/>
</dbReference>
<accession>Q8GMG0</accession>
<name>TAM_STRGL</name>
<keyword id="KW-0002">3D-structure</keyword>
<keyword id="KW-0045">Antibiotic biosynthesis</keyword>
<keyword id="KW-0413">Isomerase</keyword>
<keyword id="KW-0456">Lyase</keyword>
<evidence type="ECO:0000269" key="1">
    <source>
    </source>
</evidence>
<evidence type="ECO:0000269" key="2">
    <source>
    </source>
</evidence>
<evidence type="ECO:0000269" key="3">
    <source>
    </source>
</evidence>
<evidence type="ECO:0000269" key="4">
    <source>
    </source>
</evidence>
<evidence type="ECO:0000305" key="5"/>
<evidence type="ECO:0007829" key="6">
    <source>
        <dbReference type="PDB" id="2QVE"/>
    </source>
</evidence>